<name>GLMM_RHIEC</name>
<organism>
    <name type="scientific">Rhizobium etli (strain ATCC 51251 / DSM 11541 / JCM 21823 / NBRC 15573 / CFN 42)</name>
    <dbReference type="NCBI Taxonomy" id="347834"/>
    <lineage>
        <taxon>Bacteria</taxon>
        <taxon>Pseudomonadati</taxon>
        <taxon>Pseudomonadota</taxon>
        <taxon>Alphaproteobacteria</taxon>
        <taxon>Hyphomicrobiales</taxon>
        <taxon>Rhizobiaceae</taxon>
        <taxon>Rhizobium/Agrobacterium group</taxon>
        <taxon>Rhizobium</taxon>
    </lineage>
</organism>
<evidence type="ECO:0000255" key="1">
    <source>
        <dbReference type="HAMAP-Rule" id="MF_01554"/>
    </source>
</evidence>
<keyword id="KW-0413">Isomerase</keyword>
<keyword id="KW-0460">Magnesium</keyword>
<keyword id="KW-0479">Metal-binding</keyword>
<keyword id="KW-0597">Phosphoprotein</keyword>
<keyword id="KW-1185">Reference proteome</keyword>
<comment type="function">
    <text evidence="1">Catalyzes the conversion of glucosamine-6-phosphate to glucosamine-1-phosphate.</text>
</comment>
<comment type="catalytic activity">
    <reaction evidence="1">
        <text>alpha-D-glucosamine 1-phosphate = D-glucosamine 6-phosphate</text>
        <dbReference type="Rhea" id="RHEA:23424"/>
        <dbReference type="ChEBI" id="CHEBI:58516"/>
        <dbReference type="ChEBI" id="CHEBI:58725"/>
        <dbReference type="EC" id="5.4.2.10"/>
    </reaction>
</comment>
<comment type="cofactor">
    <cofactor evidence="1">
        <name>Mg(2+)</name>
        <dbReference type="ChEBI" id="CHEBI:18420"/>
    </cofactor>
    <text evidence="1">Binds 1 Mg(2+) ion per subunit.</text>
</comment>
<comment type="PTM">
    <text evidence="1">Activated by phosphorylation.</text>
</comment>
<comment type="similarity">
    <text evidence="1">Belongs to the phosphohexose mutase family.</text>
</comment>
<proteinExistence type="inferred from homology"/>
<accession>Q2K4M3</accession>
<protein>
    <recommendedName>
        <fullName evidence="1">Phosphoglucosamine mutase</fullName>
        <ecNumber evidence="1">5.4.2.10</ecNumber>
    </recommendedName>
</protein>
<sequence length="450" mass="48734">MKRRYFGTDGIRGQSNVFPMTPDLAMRVGIAAGTIFRRGNHRHRVVIGKDTRLSGYMLENAMVAGFTAAGLDAFILGPIPTPAVAMLTRSLRCDIGVMISASHNPYEDNGIKLFGPDGYKLSDDIEAEIEDLLEKDLNAQLAKSDDIGRAKRVDGVHDRYIEHAKRTLPRDVTLQGLRVAIDCANGAAYKVAPAVLWELGADVVTIGNEPNGTNINLNCGSTSPVALQKKVDEVRADIGIALDGDADRVIIIDENGSIVDGDQLMAVIAESWAESQQLRGNGIVATVMSNLGLERFLDERGMALARTKVGDRYVVEHMRQHNYNVGGEQSGHIVLSDYGTTGDGLVAALQILAAVKRTGRTVSEVCRRFEPVPQLLRNVRISGGKPLEDIQVQKAIADAEAELARNGRLVIRPSGTEPLIRVMAEGDDRAQIERIVNELIGTISNVRTAA</sequence>
<dbReference type="EC" id="5.4.2.10" evidence="1"/>
<dbReference type="EMBL" id="CP000133">
    <property type="protein sequence ID" value="ABC92213.1"/>
    <property type="molecule type" value="Genomic_DNA"/>
</dbReference>
<dbReference type="RefSeq" id="WP_011426682.1">
    <property type="nucleotide sequence ID" value="NC_007761.1"/>
</dbReference>
<dbReference type="SMR" id="Q2K4M3"/>
<dbReference type="KEGG" id="ret:RHE_CH03457"/>
<dbReference type="eggNOG" id="COG1109">
    <property type="taxonomic scope" value="Bacteria"/>
</dbReference>
<dbReference type="HOGENOM" id="CLU_016950_7_0_5"/>
<dbReference type="OrthoDB" id="9803322at2"/>
<dbReference type="Proteomes" id="UP000001936">
    <property type="component" value="Chromosome"/>
</dbReference>
<dbReference type="GO" id="GO:0005829">
    <property type="term" value="C:cytosol"/>
    <property type="evidence" value="ECO:0007669"/>
    <property type="project" value="TreeGrafter"/>
</dbReference>
<dbReference type="GO" id="GO:0000287">
    <property type="term" value="F:magnesium ion binding"/>
    <property type="evidence" value="ECO:0007669"/>
    <property type="project" value="UniProtKB-UniRule"/>
</dbReference>
<dbReference type="GO" id="GO:0008966">
    <property type="term" value="F:phosphoglucosamine mutase activity"/>
    <property type="evidence" value="ECO:0007669"/>
    <property type="project" value="UniProtKB-UniRule"/>
</dbReference>
<dbReference type="GO" id="GO:0004615">
    <property type="term" value="F:phosphomannomutase activity"/>
    <property type="evidence" value="ECO:0007669"/>
    <property type="project" value="TreeGrafter"/>
</dbReference>
<dbReference type="GO" id="GO:0005975">
    <property type="term" value="P:carbohydrate metabolic process"/>
    <property type="evidence" value="ECO:0007669"/>
    <property type="project" value="InterPro"/>
</dbReference>
<dbReference type="GO" id="GO:0009252">
    <property type="term" value="P:peptidoglycan biosynthetic process"/>
    <property type="evidence" value="ECO:0007669"/>
    <property type="project" value="TreeGrafter"/>
</dbReference>
<dbReference type="GO" id="GO:0006048">
    <property type="term" value="P:UDP-N-acetylglucosamine biosynthetic process"/>
    <property type="evidence" value="ECO:0007669"/>
    <property type="project" value="TreeGrafter"/>
</dbReference>
<dbReference type="CDD" id="cd05802">
    <property type="entry name" value="GlmM"/>
    <property type="match status" value="1"/>
</dbReference>
<dbReference type="FunFam" id="3.30.310.50:FF:000001">
    <property type="entry name" value="Phosphoglucosamine mutase"/>
    <property type="match status" value="1"/>
</dbReference>
<dbReference type="FunFam" id="3.40.120.10:FF:000001">
    <property type="entry name" value="Phosphoglucosamine mutase"/>
    <property type="match status" value="1"/>
</dbReference>
<dbReference type="FunFam" id="3.40.120.10:FF:000002">
    <property type="entry name" value="Phosphoglucosamine mutase"/>
    <property type="match status" value="1"/>
</dbReference>
<dbReference type="Gene3D" id="3.40.120.10">
    <property type="entry name" value="Alpha-D-Glucose-1,6-Bisphosphate, subunit A, domain 3"/>
    <property type="match status" value="3"/>
</dbReference>
<dbReference type="Gene3D" id="3.30.310.50">
    <property type="entry name" value="Alpha-D-phosphohexomutase, C-terminal domain"/>
    <property type="match status" value="1"/>
</dbReference>
<dbReference type="HAMAP" id="MF_01554_B">
    <property type="entry name" value="GlmM_B"/>
    <property type="match status" value="1"/>
</dbReference>
<dbReference type="InterPro" id="IPR005844">
    <property type="entry name" value="A-D-PHexomutase_a/b/a-I"/>
</dbReference>
<dbReference type="InterPro" id="IPR016055">
    <property type="entry name" value="A-D-PHexomutase_a/b/a-I/II/III"/>
</dbReference>
<dbReference type="InterPro" id="IPR005845">
    <property type="entry name" value="A-D-PHexomutase_a/b/a-II"/>
</dbReference>
<dbReference type="InterPro" id="IPR005846">
    <property type="entry name" value="A-D-PHexomutase_a/b/a-III"/>
</dbReference>
<dbReference type="InterPro" id="IPR005843">
    <property type="entry name" value="A-D-PHexomutase_C"/>
</dbReference>
<dbReference type="InterPro" id="IPR036900">
    <property type="entry name" value="A-D-PHexomutase_C_sf"/>
</dbReference>
<dbReference type="InterPro" id="IPR016066">
    <property type="entry name" value="A-D-PHexomutase_CS"/>
</dbReference>
<dbReference type="InterPro" id="IPR005841">
    <property type="entry name" value="Alpha-D-phosphohexomutase_SF"/>
</dbReference>
<dbReference type="InterPro" id="IPR006352">
    <property type="entry name" value="GlmM_bact"/>
</dbReference>
<dbReference type="InterPro" id="IPR050060">
    <property type="entry name" value="Phosphoglucosamine_mutase"/>
</dbReference>
<dbReference type="NCBIfam" id="TIGR01455">
    <property type="entry name" value="glmM"/>
    <property type="match status" value="1"/>
</dbReference>
<dbReference type="NCBIfam" id="NF008139">
    <property type="entry name" value="PRK10887.1"/>
    <property type="match status" value="1"/>
</dbReference>
<dbReference type="PANTHER" id="PTHR42946:SF1">
    <property type="entry name" value="PHOSPHOGLUCOMUTASE (ALPHA-D-GLUCOSE-1,6-BISPHOSPHATE-DEPENDENT)"/>
    <property type="match status" value="1"/>
</dbReference>
<dbReference type="PANTHER" id="PTHR42946">
    <property type="entry name" value="PHOSPHOHEXOSE MUTASE"/>
    <property type="match status" value="1"/>
</dbReference>
<dbReference type="Pfam" id="PF02878">
    <property type="entry name" value="PGM_PMM_I"/>
    <property type="match status" value="1"/>
</dbReference>
<dbReference type="Pfam" id="PF02879">
    <property type="entry name" value="PGM_PMM_II"/>
    <property type="match status" value="1"/>
</dbReference>
<dbReference type="Pfam" id="PF02880">
    <property type="entry name" value="PGM_PMM_III"/>
    <property type="match status" value="1"/>
</dbReference>
<dbReference type="Pfam" id="PF00408">
    <property type="entry name" value="PGM_PMM_IV"/>
    <property type="match status" value="1"/>
</dbReference>
<dbReference type="PRINTS" id="PR00509">
    <property type="entry name" value="PGMPMM"/>
</dbReference>
<dbReference type="SUPFAM" id="SSF55957">
    <property type="entry name" value="Phosphoglucomutase, C-terminal domain"/>
    <property type="match status" value="1"/>
</dbReference>
<dbReference type="SUPFAM" id="SSF53738">
    <property type="entry name" value="Phosphoglucomutase, first 3 domains"/>
    <property type="match status" value="3"/>
</dbReference>
<dbReference type="PROSITE" id="PS00710">
    <property type="entry name" value="PGM_PMM"/>
    <property type="match status" value="1"/>
</dbReference>
<reference key="1">
    <citation type="journal article" date="2006" name="Proc. Natl. Acad. Sci. U.S.A.">
        <title>The partitioned Rhizobium etli genome: genetic and metabolic redundancy in seven interacting replicons.</title>
        <authorList>
            <person name="Gonzalez V."/>
            <person name="Santamaria R.I."/>
            <person name="Bustos P."/>
            <person name="Hernandez-Gonzalez I."/>
            <person name="Medrano-Soto A."/>
            <person name="Moreno-Hagelsieb G."/>
            <person name="Janga S.C."/>
            <person name="Ramirez M.A."/>
            <person name="Jimenez-Jacinto V."/>
            <person name="Collado-Vides J."/>
            <person name="Davila G."/>
        </authorList>
    </citation>
    <scope>NUCLEOTIDE SEQUENCE [LARGE SCALE GENOMIC DNA]</scope>
    <source>
        <strain>ATCC 51251 / DSM 11541 / JCM 21823 / NBRC 15573 / CFN 42</strain>
    </source>
</reference>
<feature type="chain" id="PRO_0000301364" description="Phosphoglucosamine mutase">
    <location>
        <begin position="1"/>
        <end position="450"/>
    </location>
</feature>
<feature type="active site" description="Phosphoserine intermediate" evidence="1">
    <location>
        <position position="102"/>
    </location>
</feature>
<feature type="binding site" description="via phosphate group" evidence="1">
    <location>
        <position position="102"/>
    </location>
    <ligand>
        <name>Mg(2+)</name>
        <dbReference type="ChEBI" id="CHEBI:18420"/>
    </ligand>
</feature>
<feature type="binding site" evidence="1">
    <location>
        <position position="243"/>
    </location>
    <ligand>
        <name>Mg(2+)</name>
        <dbReference type="ChEBI" id="CHEBI:18420"/>
    </ligand>
</feature>
<feature type="binding site" evidence="1">
    <location>
        <position position="245"/>
    </location>
    <ligand>
        <name>Mg(2+)</name>
        <dbReference type="ChEBI" id="CHEBI:18420"/>
    </ligand>
</feature>
<feature type="binding site" evidence="1">
    <location>
        <position position="247"/>
    </location>
    <ligand>
        <name>Mg(2+)</name>
        <dbReference type="ChEBI" id="CHEBI:18420"/>
    </ligand>
</feature>
<feature type="modified residue" description="Phosphoserine" evidence="1">
    <location>
        <position position="102"/>
    </location>
</feature>
<gene>
    <name evidence="1" type="primary">glmM</name>
    <name type="ordered locus">RHE_CH03457</name>
</gene>